<protein>
    <recommendedName>
        <fullName evidence="1">2,3,4,5-tetrahydropyridine-2,6-dicarboxylate N-succinyltransferase</fullName>
        <ecNumber evidence="1">2.3.1.117</ecNumber>
    </recommendedName>
    <alternativeName>
        <fullName evidence="1">Tetrahydrodipicolinate N-succinyltransferase</fullName>
        <shortName evidence="1">THP succinyltransferase</shortName>
        <shortName evidence="1">Tetrahydropicolinate succinylase</shortName>
    </alternativeName>
</protein>
<accession>B3R2C8</accession>
<feature type="chain" id="PRO_1000134039" description="2,3,4,5-tetrahydropyridine-2,6-dicarboxylate N-succinyltransferase">
    <location>
        <begin position="1"/>
        <end position="275"/>
    </location>
</feature>
<sequence>MTQALQALIDQAWEDRTSLSPKSAPNDIREAVANVIGQLDAGTLRVAEKQGKDWIVNQWVKKAVLLSFRLEDNAPMSAGGFAQFYDKVPTKFANWSGDDFAKAGFRVVPPAVARRGSFIAKNAVLMPSYVNIGAYVDEGTMVDTWATVGSCAQIGKNVHLSGGVGIGGVLEPLQANPVIIEDNCFIGARSEVVEGVIVEENSVISMGVYLGQSTKIYDRETGEIHYGRVPAGSVVVAGNLPSKDGKYSLYCAVIVKKVDAQTRAKTSLNDLLRGD</sequence>
<name>DAPD_CUPTR</name>
<comment type="catalytic activity">
    <reaction evidence="1">
        <text>(S)-2,3,4,5-tetrahydrodipicolinate + succinyl-CoA + H2O = (S)-2-succinylamino-6-oxoheptanedioate + CoA</text>
        <dbReference type="Rhea" id="RHEA:17325"/>
        <dbReference type="ChEBI" id="CHEBI:15377"/>
        <dbReference type="ChEBI" id="CHEBI:15685"/>
        <dbReference type="ChEBI" id="CHEBI:16845"/>
        <dbReference type="ChEBI" id="CHEBI:57287"/>
        <dbReference type="ChEBI" id="CHEBI:57292"/>
        <dbReference type="EC" id="2.3.1.117"/>
    </reaction>
</comment>
<comment type="pathway">
    <text evidence="1">Amino-acid biosynthesis; L-lysine biosynthesis via DAP pathway; LL-2,6-diaminopimelate from (S)-tetrahydrodipicolinate (succinylase route): step 1/3.</text>
</comment>
<comment type="subcellular location">
    <subcellularLocation>
        <location evidence="1">Cytoplasm</location>
    </subcellularLocation>
</comment>
<comment type="similarity">
    <text evidence="1">Belongs to the transferase hexapeptide repeat family.</text>
</comment>
<organism>
    <name type="scientific">Cupriavidus taiwanensis (strain DSM 17343 / BCRC 17206 / CCUG 44338 / CIP 107171 / LMG 19424 / R1)</name>
    <name type="common">Ralstonia taiwanensis (strain LMG 19424)</name>
    <dbReference type="NCBI Taxonomy" id="977880"/>
    <lineage>
        <taxon>Bacteria</taxon>
        <taxon>Pseudomonadati</taxon>
        <taxon>Pseudomonadota</taxon>
        <taxon>Betaproteobacteria</taxon>
        <taxon>Burkholderiales</taxon>
        <taxon>Burkholderiaceae</taxon>
        <taxon>Cupriavidus</taxon>
    </lineage>
</organism>
<evidence type="ECO:0000255" key="1">
    <source>
        <dbReference type="HAMAP-Rule" id="MF_00811"/>
    </source>
</evidence>
<keyword id="KW-0012">Acyltransferase</keyword>
<keyword id="KW-0028">Amino-acid biosynthesis</keyword>
<keyword id="KW-0963">Cytoplasm</keyword>
<keyword id="KW-0220">Diaminopimelate biosynthesis</keyword>
<keyword id="KW-0457">Lysine biosynthesis</keyword>
<keyword id="KW-0677">Repeat</keyword>
<keyword id="KW-0808">Transferase</keyword>
<reference key="1">
    <citation type="journal article" date="2008" name="Genome Res.">
        <title>Genome sequence of the beta-rhizobium Cupriavidus taiwanensis and comparative genomics of rhizobia.</title>
        <authorList>
            <person name="Amadou C."/>
            <person name="Pascal G."/>
            <person name="Mangenot S."/>
            <person name="Glew M."/>
            <person name="Bontemps C."/>
            <person name="Capela D."/>
            <person name="Carrere S."/>
            <person name="Cruveiller S."/>
            <person name="Dossat C."/>
            <person name="Lajus A."/>
            <person name="Marchetti M."/>
            <person name="Poinsot V."/>
            <person name="Rouy Z."/>
            <person name="Servin B."/>
            <person name="Saad M."/>
            <person name="Schenowitz C."/>
            <person name="Barbe V."/>
            <person name="Batut J."/>
            <person name="Medigue C."/>
            <person name="Masson-Boivin C."/>
        </authorList>
    </citation>
    <scope>NUCLEOTIDE SEQUENCE [LARGE SCALE GENOMIC DNA]</scope>
    <source>
        <strain>DSM 17343 / BCRC 17206 / CCUG 44338 / CIP 107171 / LMG 19424 / R1</strain>
    </source>
</reference>
<gene>
    <name evidence="1" type="primary">dapD</name>
    <name type="ordered locus">RALTA_A1702</name>
</gene>
<dbReference type="EC" id="2.3.1.117" evidence="1"/>
<dbReference type="EMBL" id="CU633749">
    <property type="protein sequence ID" value="CAQ69645.1"/>
    <property type="molecule type" value="Genomic_DNA"/>
</dbReference>
<dbReference type="RefSeq" id="WP_012352965.1">
    <property type="nucleotide sequence ID" value="NC_010528.1"/>
</dbReference>
<dbReference type="SMR" id="B3R2C8"/>
<dbReference type="GeneID" id="29760662"/>
<dbReference type="KEGG" id="cti:RALTA_A1702"/>
<dbReference type="eggNOG" id="COG2171">
    <property type="taxonomic scope" value="Bacteria"/>
</dbReference>
<dbReference type="HOGENOM" id="CLU_050859_0_1_4"/>
<dbReference type="BioCyc" id="CTAI977880:RALTA_RS08185-MONOMER"/>
<dbReference type="UniPathway" id="UPA00034">
    <property type="reaction ID" value="UER00019"/>
</dbReference>
<dbReference type="Proteomes" id="UP000001692">
    <property type="component" value="Chromosome 1"/>
</dbReference>
<dbReference type="GO" id="GO:0005737">
    <property type="term" value="C:cytoplasm"/>
    <property type="evidence" value="ECO:0007669"/>
    <property type="project" value="UniProtKB-SubCell"/>
</dbReference>
<dbReference type="GO" id="GO:0008666">
    <property type="term" value="F:2,3,4,5-tetrahydropyridine-2,6-dicarboxylate N-succinyltransferase activity"/>
    <property type="evidence" value="ECO:0007669"/>
    <property type="project" value="UniProtKB-UniRule"/>
</dbReference>
<dbReference type="GO" id="GO:0016779">
    <property type="term" value="F:nucleotidyltransferase activity"/>
    <property type="evidence" value="ECO:0007669"/>
    <property type="project" value="TreeGrafter"/>
</dbReference>
<dbReference type="GO" id="GO:0019877">
    <property type="term" value="P:diaminopimelate biosynthetic process"/>
    <property type="evidence" value="ECO:0007669"/>
    <property type="project" value="UniProtKB-UniRule"/>
</dbReference>
<dbReference type="GO" id="GO:0009089">
    <property type="term" value="P:lysine biosynthetic process via diaminopimelate"/>
    <property type="evidence" value="ECO:0007669"/>
    <property type="project" value="UniProtKB-UniRule"/>
</dbReference>
<dbReference type="CDD" id="cd03350">
    <property type="entry name" value="LbH_THP_succinylT"/>
    <property type="match status" value="1"/>
</dbReference>
<dbReference type="Gene3D" id="2.160.10.10">
    <property type="entry name" value="Hexapeptide repeat proteins"/>
    <property type="match status" value="1"/>
</dbReference>
<dbReference type="Gene3D" id="1.10.166.10">
    <property type="entry name" value="Tetrahydrodipicolinate-N-succinyltransferase, N-terminal domain"/>
    <property type="match status" value="1"/>
</dbReference>
<dbReference type="HAMAP" id="MF_00811">
    <property type="entry name" value="DapD"/>
    <property type="match status" value="1"/>
</dbReference>
<dbReference type="InterPro" id="IPR005664">
    <property type="entry name" value="DapD_Trfase_Hexpep_rpt_fam"/>
</dbReference>
<dbReference type="InterPro" id="IPR001451">
    <property type="entry name" value="Hexapep"/>
</dbReference>
<dbReference type="InterPro" id="IPR018357">
    <property type="entry name" value="Hexapep_transf_CS"/>
</dbReference>
<dbReference type="InterPro" id="IPR023180">
    <property type="entry name" value="THP_succinylTrfase_dom1"/>
</dbReference>
<dbReference type="InterPro" id="IPR037133">
    <property type="entry name" value="THP_succinylTrfase_N_sf"/>
</dbReference>
<dbReference type="InterPro" id="IPR011004">
    <property type="entry name" value="Trimer_LpxA-like_sf"/>
</dbReference>
<dbReference type="NCBIfam" id="TIGR00965">
    <property type="entry name" value="dapD"/>
    <property type="match status" value="1"/>
</dbReference>
<dbReference type="NCBIfam" id="NF008808">
    <property type="entry name" value="PRK11830.1"/>
    <property type="match status" value="1"/>
</dbReference>
<dbReference type="PANTHER" id="PTHR19136:SF52">
    <property type="entry name" value="2,3,4,5-TETRAHYDROPYRIDINE-2,6-DICARBOXYLATE N-SUCCINYLTRANSFERASE"/>
    <property type="match status" value="1"/>
</dbReference>
<dbReference type="PANTHER" id="PTHR19136">
    <property type="entry name" value="MOLYBDENUM COFACTOR GUANYLYLTRANSFERASE"/>
    <property type="match status" value="1"/>
</dbReference>
<dbReference type="Pfam" id="PF14602">
    <property type="entry name" value="Hexapep_2"/>
    <property type="match status" value="1"/>
</dbReference>
<dbReference type="Pfam" id="PF14805">
    <property type="entry name" value="THDPS_N_2"/>
    <property type="match status" value="1"/>
</dbReference>
<dbReference type="SUPFAM" id="SSF51161">
    <property type="entry name" value="Trimeric LpxA-like enzymes"/>
    <property type="match status" value="1"/>
</dbReference>
<dbReference type="PROSITE" id="PS00101">
    <property type="entry name" value="HEXAPEP_TRANSFERASES"/>
    <property type="match status" value="1"/>
</dbReference>
<proteinExistence type="inferred from homology"/>